<dbReference type="EC" id="7.3.2.2" evidence="1"/>
<dbReference type="EMBL" id="AE017194">
    <property type="protein sequence ID" value="AAS42627.1"/>
    <property type="molecule type" value="Genomic_DNA"/>
</dbReference>
<dbReference type="SMR" id="Q733D6"/>
<dbReference type="KEGG" id="bca:BCE_3722"/>
<dbReference type="HOGENOM" id="CLU_000604_1_22_9"/>
<dbReference type="Proteomes" id="UP000002527">
    <property type="component" value="Chromosome"/>
</dbReference>
<dbReference type="GO" id="GO:0005886">
    <property type="term" value="C:plasma membrane"/>
    <property type="evidence" value="ECO:0007669"/>
    <property type="project" value="UniProtKB-SubCell"/>
</dbReference>
<dbReference type="GO" id="GO:0015416">
    <property type="term" value="F:ABC-type phosphonate transporter activity"/>
    <property type="evidence" value="ECO:0007669"/>
    <property type="project" value="UniProtKB-EC"/>
</dbReference>
<dbReference type="GO" id="GO:0005524">
    <property type="term" value="F:ATP binding"/>
    <property type="evidence" value="ECO:0007669"/>
    <property type="project" value="UniProtKB-KW"/>
</dbReference>
<dbReference type="GO" id="GO:0016887">
    <property type="term" value="F:ATP hydrolysis activity"/>
    <property type="evidence" value="ECO:0007669"/>
    <property type="project" value="InterPro"/>
</dbReference>
<dbReference type="CDD" id="cd03256">
    <property type="entry name" value="ABC_PhnC_transporter"/>
    <property type="match status" value="1"/>
</dbReference>
<dbReference type="FunFam" id="3.40.50.300:FF:001482">
    <property type="entry name" value="Phosphonates import ATP-binding protein PhnC"/>
    <property type="match status" value="1"/>
</dbReference>
<dbReference type="Gene3D" id="3.40.50.300">
    <property type="entry name" value="P-loop containing nucleotide triphosphate hydrolases"/>
    <property type="match status" value="1"/>
</dbReference>
<dbReference type="InterPro" id="IPR003593">
    <property type="entry name" value="AAA+_ATPase"/>
</dbReference>
<dbReference type="InterPro" id="IPR003439">
    <property type="entry name" value="ABC_transporter-like_ATP-bd"/>
</dbReference>
<dbReference type="InterPro" id="IPR017871">
    <property type="entry name" value="ABC_transporter-like_CS"/>
</dbReference>
<dbReference type="InterPro" id="IPR012693">
    <property type="entry name" value="ABC_transpr_PhnC"/>
</dbReference>
<dbReference type="InterPro" id="IPR050086">
    <property type="entry name" value="MetN_ABC_transporter-like"/>
</dbReference>
<dbReference type="InterPro" id="IPR027417">
    <property type="entry name" value="P-loop_NTPase"/>
</dbReference>
<dbReference type="NCBIfam" id="TIGR02315">
    <property type="entry name" value="ABC_phnC"/>
    <property type="match status" value="1"/>
</dbReference>
<dbReference type="PANTHER" id="PTHR43166">
    <property type="entry name" value="AMINO ACID IMPORT ATP-BINDING PROTEIN"/>
    <property type="match status" value="1"/>
</dbReference>
<dbReference type="PANTHER" id="PTHR43166:SF6">
    <property type="entry name" value="PHOSPHONATES IMPORT ATP-BINDING PROTEIN PHNC"/>
    <property type="match status" value="1"/>
</dbReference>
<dbReference type="Pfam" id="PF00005">
    <property type="entry name" value="ABC_tran"/>
    <property type="match status" value="1"/>
</dbReference>
<dbReference type="SMART" id="SM00382">
    <property type="entry name" value="AAA"/>
    <property type="match status" value="1"/>
</dbReference>
<dbReference type="SUPFAM" id="SSF52540">
    <property type="entry name" value="P-loop containing nucleoside triphosphate hydrolases"/>
    <property type="match status" value="1"/>
</dbReference>
<dbReference type="PROSITE" id="PS00211">
    <property type="entry name" value="ABC_TRANSPORTER_1"/>
    <property type="match status" value="1"/>
</dbReference>
<dbReference type="PROSITE" id="PS50893">
    <property type="entry name" value="ABC_TRANSPORTER_2"/>
    <property type="match status" value="1"/>
</dbReference>
<dbReference type="PROSITE" id="PS51249">
    <property type="entry name" value="PHNC"/>
    <property type="match status" value="1"/>
</dbReference>
<gene>
    <name evidence="1" type="primary">phnC</name>
    <name type="ordered locus">BCE_3722</name>
</gene>
<evidence type="ECO:0000255" key="1">
    <source>
        <dbReference type="HAMAP-Rule" id="MF_01713"/>
    </source>
</evidence>
<sequence>MIEFRNVSKVYPNGTKGLNHINLKIQKGEFVVMVGLSGAGKSTLLRSVNRLHEITEGEIMIEGESITAAKGKGLRRMRRDIGMIFQSFNLVKRSTVLKNVLAGRVGYHSTLRTTLGIFPKEDLELAFQSLKRVNILEKAYARADELSGGQQQRVSIARALAQEAKIILADEPVASLDPLTTKQVLDDLKKINEDFGITTIVNLHSIDLARQYATRIIGLHAGEIVFDGLVEEATDEKFAEIYGDVAQKSELLEVAVK</sequence>
<comment type="function">
    <text evidence="1">Part of the ABC transporter complex PhnCDE involved in phosphonates import. Responsible for energy coupling to the transport system.</text>
</comment>
<comment type="catalytic activity">
    <reaction evidence="1">
        <text>phosphonate(out) + ATP + H2O = phosphonate(in) + ADP + phosphate + H(+)</text>
        <dbReference type="Rhea" id="RHEA:18065"/>
        <dbReference type="ChEBI" id="CHEBI:15377"/>
        <dbReference type="ChEBI" id="CHEBI:15378"/>
        <dbReference type="ChEBI" id="CHEBI:16215"/>
        <dbReference type="ChEBI" id="CHEBI:30616"/>
        <dbReference type="ChEBI" id="CHEBI:43474"/>
        <dbReference type="ChEBI" id="CHEBI:456216"/>
        <dbReference type="EC" id="7.3.2.2"/>
    </reaction>
</comment>
<comment type="subunit">
    <text evidence="1">The complex is composed of two ATP-binding proteins (PhnC), two transmembrane proteins (PhnE) and a solute-binding protein (PhnD).</text>
</comment>
<comment type="subcellular location">
    <subcellularLocation>
        <location evidence="1">Cell membrane</location>
        <topology evidence="1">Peripheral membrane protein</topology>
    </subcellularLocation>
</comment>
<comment type="similarity">
    <text evidence="1">Belongs to the ABC transporter superfamily. Phosphonates importer (TC 3.A.1.9.1) family.</text>
</comment>
<reference key="1">
    <citation type="journal article" date="2004" name="Nucleic Acids Res.">
        <title>The genome sequence of Bacillus cereus ATCC 10987 reveals metabolic adaptations and a large plasmid related to Bacillus anthracis pXO1.</title>
        <authorList>
            <person name="Rasko D.A."/>
            <person name="Ravel J."/>
            <person name="Oekstad O.A."/>
            <person name="Helgason E."/>
            <person name="Cer R.Z."/>
            <person name="Jiang L."/>
            <person name="Shores K.A."/>
            <person name="Fouts D.E."/>
            <person name="Tourasse N.J."/>
            <person name="Angiuoli S.V."/>
            <person name="Kolonay J.F."/>
            <person name="Nelson W.C."/>
            <person name="Kolstoe A.-B."/>
            <person name="Fraser C.M."/>
            <person name="Read T.D."/>
        </authorList>
    </citation>
    <scope>NUCLEOTIDE SEQUENCE [LARGE SCALE GENOMIC DNA]</scope>
    <source>
        <strain>ATCC 10987 / NRS 248</strain>
    </source>
</reference>
<protein>
    <recommendedName>
        <fullName evidence="1">Phosphonates import ATP-binding protein PhnC</fullName>
        <ecNumber evidence="1">7.3.2.2</ecNumber>
    </recommendedName>
</protein>
<proteinExistence type="inferred from homology"/>
<organism>
    <name type="scientific">Bacillus cereus (strain ATCC 10987 / NRS 248)</name>
    <dbReference type="NCBI Taxonomy" id="222523"/>
    <lineage>
        <taxon>Bacteria</taxon>
        <taxon>Bacillati</taxon>
        <taxon>Bacillota</taxon>
        <taxon>Bacilli</taxon>
        <taxon>Bacillales</taxon>
        <taxon>Bacillaceae</taxon>
        <taxon>Bacillus</taxon>
        <taxon>Bacillus cereus group</taxon>
    </lineage>
</organism>
<feature type="chain" id="PRO_0000092689" description="Phosphonates import ATP-binding protein PhnC">
    <location>
        <begin position="1"/>
        <end position="257"/>
    </location>
</feature>
<feature type="domain" description="ABC transporter" evidence="1">
    <location>
        <begin position="2"/>
        <end position="246"/>
    </location>
</feature>
<feature type="binding site" evidence="1">
    <location>
        <begin position="35"/>
        <end position="42"/>
    </location>
    <ligand>
        <name>ATP</name>
        <dbReference type="ChEBI" id="CHEBI:30616"/>
    </ligand>
</feature>
<keyword id="KW-0067">ATP-binding</keyword>
<keyword id="KW-1003">Cell membrane</keyword>
<keyword id="KW-0472">Membrane</keyword>
<keyword id="KW-0547">Nucleotide-binding</keyword>
<keyword id="KW-0918">Phosphonate transport</keyword>
<keyword id="KW-1278">Translocase</keyword>
<keyword id="KW-0813">Transport</keyword>
<accession>Q733D6</accession>
<name>PHNC_BACC1</name>